<evidence type="ECO:0000250" key="1"/>
<evidence type="ECO:0000255" key="2"/>
<evidence type="ECO:0000269" key="3">
    <source>
    </source>
</evidence>
<evidence type="ECO:0000305" key="4"/>
<proteinExistence type="evidence at protein level"/>
<organism>
    <name type="scientific">Taxus cuspidata</name>
    <name type="common">Japanese yew</name>
    <dbReference type="NCBI Taxonomy" id="99806"/>
    <lineage>
        <taxon>Eukaryota</taxon>
        <taxon>Viridiplantae</taxon>
        <taxon>Streptophyta</taxon>
        <taxon>Embryophyta</taxon>
        <taxon>Tracheophyta</taxon>
        <taxon>Spermatophyta</taxon>
        <taxon>Pinopsida</taxon>
        <taxon>Pinidae</taxon>
        <taxon>Conifers II</taxon>
        <taxon>Cupressales</taxon>
        <taxon>Taxaceae</taxon>
        <taxon>Taxus</taxon>
    </lineage>
</organism>
<name>T14H_TAXCU</name>
<feature type="chain" id="PRO_0000418753" description="Taxoid 14-beta-hydroxylase">
    <location>
        <begin position="1"/>
        <end position="509"/>
    </location>
</feature>
<feature type="transmembrane region" description="Helical" evidence="2">
    <location>
        <begin position="20"/>
        <end position="40"/>
    </location>
</feature>
<feature type="transmembrane region" description="Helical" evidence="2">
    <location>
        <begin position="186"/>
        <end position="206"/>
    </location>
</feature>
<feature type="transmembrane region" description="Helical" evidence="2">
    <location>
        <begin position="218"/>
        <end position="238"/>
    </location>
</feature>
<feature type="binding site" description="axial binding residue" evidence="1">
    <location>
        <position position="443"/>
    </location>
    <ligand>
        <name>heme</name>
        <dbReference type="ChEBI" id="CHEBI:30413"/>
    </ligand>
    <ligandPart>
        <name>Fe</name>
        <dbReference type="ChEBI" id="CHEBI:18248"/>
    </ligandPart>
</feature>
<dbReference type="EC" id="1.14.13.146"/>
<dbReference type="EMBL" id="AY188177">
    <property type="protein sequence ID" value="AAO66199.1"/>
    <property type="molecule type" value="mRNA"/>
</dbReference>
<dbReference type="SMR" id="Q84KI1"/>
<dbReference type="KEGG" id="ag:AAO66199"/>
<dbReference type="BioCyc" id="MetaCyc:MONOMER-13409"/>
<dbReference type="BRENDA" id="1.14.13.146">
    <property type="organism ID" value="6225"/>
</dbReference>
<dbReference type="UniPathway" id="UPA00842"/>
<dbReference type="GO" id="GO:0005783">
    <property type="term" value="C:endoplasmic reticulum"/>
    <property type="evidence" value="ECO:0007669"/>
    <property type="project" value="UniProtKB-KW"/>
</dbReference>
<dbReference type="GO" id="GO:0043231">
    <property type="term" value="C:intracellular membrane-bounded organelle"/>
    <property type="evidence" value="ECO:0000314"/>
    <property type="project" value="UniProtKB"/>
</dbReference>
<dbReference type="GO" id="GO:0016020">
    <property type="term" value="C:membrane"/>
    <property type="evidence" value="ECO:0007669"/>
    <property type="project" value="UniProtKB-KW"/>
</dbReference>
<dbReference type="GO" id="GO:0020037">
    <property type="term" value="F:heme binding"/>
    <property type="evidence" value="ECO:0007669"/>
    <property type="project" value="InterPro"/>
</dbReference>
<dbReference type="GO" id="GO:0005506">
    <property type="term" value="F:iron ion binding"/>
    <property type="evidence" value="ECO:0007669"/>
    <property type="project" value="InterPro"/>
</dbReference>
<dbReference type="GO" id="GO:0036203">
    <property type="term" value="F:taxoid 14-beta-hydroxylase activity"/>
    <property type="evidence" value="ECO:0000314"/>
    <property type="project" value="UniProtKB"/>
</dbReference>
<dbReference type="GO" id="GO:0042617">
    <property type="term" value="P:paclitaxel biosynthetic process"/>
    <property type="evidence" value="ECO:0000314"/>
    <property type="project" value="UniProtKB"/>
</dbReference>
<dbReference type="GO" id="GO:0016125">
    <property type="term" value="P:sterol metabolic process"/>
    <property type="evidence" value="ECO:0007669"/>
    <property type="project" value="TreeGrafter"/>
</dbReference>
<dbReference type="CDD" id="cd11043">
    <property type="entry name" value="CYP90-like"/>
    <property type="match status" value="1"/>
</dbReference>
<dbReference type="FunFam" id="1.10.630.10:FF:000022">
    <property type="entry name" value="Taxadiene 5-alpha hydroxylase"/>
    <property type="match status" value="1"/>
</dbReference>
<dbReference type="Gene3D" id="1.10.630.10">
    <property type="entry name" value="Cytochrome P450"/>
    <property type="match status" value="1"/>
</dbReference>
<dbReference type="InterPro" id="IPR001128">
    <property type="entry name" value="Cyt_P450"/>
</dbReference>
<dbReference type="InterPro" id="IPR017972">
    <property type="entry name" value="Cyt_P450_CS"/>
</dbReference>
<dbReference type="InterPro" id="IPR002401">
    <property type="entry name" value="Cyt_P450_E_grp-I"/>
</dbReference>
<dbReference type="InterPro" id="IPR036396">
    <property type="entry name" value="Cyt_P450_sf"/>
</dbReference>
<dbReference type="PANTHER" id="PTHR24286">
    <property type="entry name" value="CYTOCHROME P450 26"/>
    <property type="match status" value="1"/>
</dbReference>
<dbReference type="PANTHER" id="PTHR24286:SF384">
    <property type="entry name" value="P450, PUTATIVE (EUROFUNG)-RELATED"/>
    <property type="match status" value="1"/>
</dbReference>
<dbReference type="Pfam" id="PF00067">
    <property type="entry name" value="p450"/>
    <property type="match status" value="1"/>
</dbReference>
<dbReference type="PRINTS" id="PR00463">
    <property type="entry name" value="EP450I"/>
</dbReference>
<dbReference type="PRINTS" id="PR00385">
    <property type="entry name" value="P450"/>
</dbReference>
<dbReference type="SUPFAM" id="SSF48264">
    <property type="entry name" value="Cytochrome P450"/>
    <property type="match status" value="1"/>
</dbReference>
<dbReference type="PROSITE" id="PS00086">
    <property type="entry name" value="CYTOCHROME_P450"/>
    <property type="match status" value="1"/>
</dbReference>
<accession>Q84KI1</accession>
<sequence>MDVFYPLKSTVAKFNECFPAILFIVLSAVAGIVLPLLLFLRSKRRSSVGLPPGKLGYPFIGESLLFLKALRSNTVEQFLDERVKNFGNVFKTSLIGHPTVVLCGPAGNRLILANEEKLVQMSWPKSSMKLMGEKSITAKRGEGHMIIRSALQGFFSPGALQKYIGQMSKTIENHINEKWKGNDQVSVVALVGDLVFDISACLFFNINEKHERERLFELLEIIAVGVLAVPVDLPGFAYHRALQARSKLNAILSGLIEKRKMDLSSGLATSNQDLLSVFLTFKDDRGNPCSDEEILDNFSGLLHGSYDTTVSAMACVFKLLSSNPECYEKVVQEQLGILSNKLEGDEITWKDVKSMKYTWQVVQETLRLYPSIFGSFRQAITDIHYNGYIIPKGWKLLWTPYTTHPKEMYFSEPEKFLPSRFDQEGKLVAPYTFLPFGGGQRSCPGWEFSKMEILLSVHHFVKTFSTFTPVDPAEIIARDSLCPLPSNGFSVKLFPRSYSLHTGNQVKKI</sequence>
<protein>
    <recommendedName>
        <fullName>Taxoid 14-beta-hydroxylase</fullName>
        <ecNumber>1.14.13.146</ecNumber>
    </recommendedName>
    <alternativeName>
        <fullName>Taxane 14b-hydroxylase</fullName>
    </alternativeName>
</protein>
<reference key="1">
    <citation type="journal article" date="2003" name="Arch. Biochem. Biophys.">
        <title>Taxoid metabolism: Taxoid 14beta-hydroxylase is a cytochrome P450-dependent monooxygenase.</title>
        <authorList>
            <person name="Jennewein S."/>
            <person name="Rithner C.D."/>
            <person name="Williams R.M."/>
            <person name="Croteau R."/>
        </authorList>
    </citation>
    <scope>NUCLEOTIDE SEQUENCE [MRNA]</scope>
    <scope>FUNCTION</scope>
    <scope>CATALYTIC ACTIVITY</scope>
    <scope>BIOPHYSICOCHEMICAL PROPERTIES</scope>
    <scope>SUBCELLULAR LOCATION</scope>
</reference>
<comment type="function">
    <text evidence="3">Catalyzes the conversion of 5-alpha-acetoxy-10beta-ol to 5-alpha-acetoxy-10beta,14beta-dihydroxy taxadiene. Also acts on taxa-4(20),11-dien-5-alpha-yl acetate.</text>
</comment>
<comment type="catalytic activity">
    <reaction evidence="3">
        <text>10beta-hydroxytaxa-4(20),11-dien-5alpha-yl acetate + NADPH + O2 + H(+) = 10beta,14beta-dihydroxytaxa-4(20),11-dien-5alpha-yl acetate + NADP(+) + H2O</text>
        <dbReference type="Rhea" id="RHEA:31971"/>
        <dbReference type="ChEBI" id="CHEBI:15377"/>
        <dbReference type="ChEBI" id="CHEBI:15378"/>
        <dbReference type="ChEBI" id="CHEBI:15379"/>
        <dbReference type="ChEBI" id="CHEBI:50436"/>
        <dbReference type="ChEBI" id="CHEBI:57783"/>
        <dbReference type="ChEBI" id="CHEBI:58349"/>
        <dbReference type="ChEBI" id="CHEBI:63663"/>
        <dbReference type="EC" id="1.14.13.146"/>
    </reaction>
</comment>
<comment type="biophysicochemical properties">
    <kinetics>
        <KM evidence="3">33 uM for 5-alpha-acetoxy taxadiene</KM>
        <KM evidence="3">55 uM for 5-alpha-acetoxy-10-beta-hydroxy taxadiene</KM>
    </kinetics>
    <phDependence>
        <text evidence="3">Optimum pH is 7.5.</text>
    </phDependence>
</comment>
<comment type="pathway">
    <text>Alkaloid biosynthesis; taxol biosynthesis.</text>
</comment>
<comment type="subcellular location">
    <subcellularLocation>
        <location evidence="3">Microsome membrane</location>
        <topology evidence="3">Multi-pass membrane protein</topology>
    </subcellularLocation>
</comment>
<comment type="similarity">
    <text evidence="4">Belongs to the cytochrome P450 family.</text>
</comment>
<keyword id="KW-0256">Endoplasmic reticulum</keyword>
<keyword id="KW-0349">Heme</keyword>
<keyword id="KW-0408">Iron</keyword>
<keyword id="KW-0472">Membrane</keyword>
<keyword id="KW-0479">Metal-binding</keyword>
<keyword id="KW-0492">Microsome</keyword>
<keyword id="KW-0503">Monooxygenase</keyword>
<keyword id="KW-0521">NADP</keyword>
<keyword id="KW-0560">Oxidoreductase</keyword>
<keyword id="KW-0876">Taxol biosynthesis</keyword>
<keyword id="KW-0812">Transmembrane</keyword>
<keyword id="KW-1133">Transmembrane helix</keyword>